<sequence length="887" mass="95738">MSGVNEIRSTFLDYFKKNGHEIVPSSPLVPRNDPTLMFTNAGMVQFKNVFTGLESRPYSTAASAQKCVRAGGKHNDLDNVGYTARHHTFFEMLGNFSFGDYFKEEAITHAWNLITKEFGIDRNRLLVTVYHTDDEAFNLWKKIAGFSDDRIIRIPTSDNFWAMGDTGPCGPCSEIFYDHGDHIWGGPPGSPEEDGDRFIEIWNLVFMQYEQLTKEERIDLPRPSIDTGMGLERISALLQGKHDNYDTDLFRALIAASVEATGVPAEGEHRASHRVIADHLRSSAFLIADGVLPSSEGRGYVLRRIMRRAMRHAELLGSRDPLIYRLLPALIQQMGRAYPELVRAEALISETLKLEETRFRKTLERGLSLLSDATSTLHKGDMLDGETAFKLYDTYGFPLDLTQDALRAREIGVDISGFTDAMQRQKAEARSHWAGSGDKATETVWFELKEKFGATEFLGYDTESAEGVIQAIVRDGKEVDSAAEGETVHIVVNQTPFYGESGGQMGDTGVIVGDAGTFDVSGTQKKGEGLFVHSGTVSKGGLKVNEAVQLTVDHDRRSRLRANHSATHLLHEALREVLGTHVAQKGSLVAPERLRFDVSHPKPMSAEELKVVEDMANEIVLQNSPVVTRLMSVDDAIAEGAMALFGEKYGDEVRVVSMGTGLHGAKANRPYSVELCGGTHVAATGQIGLIRILGESAVGSGVRRLEAVTGQGALAYLAEQDERVKALASSLKVQPGDVLSRVEGLLDERKKLERELADARKKLAMGGGSSDAGANDVQQVAGVNFLAKSLSGIDAKDLKGLADEAKANLGSGVVLLIAVSDDGKASAVAAVTEDLTGRFSAVDIVRTASAALGGKGGGGRPDMAQAGGPDGTKAKEAIEAVAAALAA</sequence>
<gene>
    <name evidence="1" type="primary">alaS</name>
    <name type="ordered locus">Atu1873</name>
    <name type="ORF">AGR_C_3437</name>
</gene>
<organism>
    <name type="scientific">Agrobacterium fabrum (strain C58 / ATCC 33970)</name>
    <name type="common">Agrobacterium tumefaciens (strain C58)</name>
    <dbReference type="NCBI Taxonomy" id="176299"/>
    <lineage>
        <taxon>Bacteria</taxon>
        <taxon>Pseudomonadati</taxon>
        <taxon>Pseudomonadota</taxon>
        <taxon>Alphaproteobacteria</taxon>
        <taxon>Hyphomicrobiales</taxon>
        <taxon>Rhizobiaceae</taxon>
        <taxon>Rhizobium/Agrobacterium group</taxon>
        <taxon>Agrobacterium</taxon>
        <taxon>Agrobacterium tumefaciens complex</taxon>
    </lineage>
</organism>
<keyword id="KW-0030">Aminoacyl-tRNA synthetase</keyword>
<keyword id="KW-0067">ATP-binding</keyword>
<keyword id="KW-0963">Cytoplasm</keyword>
<keyword id="KW-0436">Ligase</keyword>
<keyword id="KW-0479">Metal-binding</keyword>
<keyword id="KW-0547">Nucleotide-binding</keyword>
<keyword id="KW-0648">Protein biosynthesis</keyword>
<keyword id="KW-1185">Reference proteome</keyword>
<keyword id="KW-0694">RNA-binding</keyword>
<keyword id="KW-0820">tRNA-binding</keyword>
<keyword id="KW-0862">Zinc</keyword>
<proteinExistence type="inferred from homology"/>
<feature type="chain" id="PRO_0000075044" description="Alanine--tRNA ligase">
    <location>
        <begin position="1"/>
        <end position="887"/>
    </location>
</feature>
<feature type="binding site" evidence="1">
    <location>
        <position position="564"/>
    </location>
    <ligand>
        <name>Zn(2+)</name>
        <dbReference type="ChEBI" id="CHEBI:29105"/>
    </ligand>
</feature>
<feature type="binding site" evidence="1">
    <location>
        <position position="568"/>
    </location>
    <ligand>
        <name>Zn(2+)</name>
        <dbReference type="ChEBI" id="CHEBI:29105"/>
    </ligand>
</feature>
<feature type="binding site" evidence="1">
    <location>
        <position position="676"/>
    </location>
    <ligand>
        <name>Zn(2+)</name>
        <dbReference type="ChEBI" id="CHEBI:29105"/>
    </ligand>
</feature>
<feature type="binding site" evidence="1">
    <location>
        <position position="680"/>
    </location>
    <ligand>
        <name>Zn(2+)</name>
        <dbReference type="ChEBI" id="CHEBI:29105"/>
    </ligand>
</feature>
<comment type="function">
    <text evidence="1">Catalyzes the attachment of alanine to tRNA(Ala) in a two-step reaction: alanine is first activated by ATP to form Ala-AMP and then transferred to the acceptor end of tRNA(Ala). Also edits incorrectly charged Ser-tRNA(Ala) and Gly-tRNA(Ala) via its editing domain.</text>
</comment>
<comment type="catalytic activity">
    <reaction evidence="1">
        <text>tRNA(Ala) + L-alanine + ATP = L-alanyl-tRNA(Ala) + AMP + diphosphate</text>
        <dbReference type="Rhea" id="RHEA:12540"/>
        <dbReference type="Rhea" id="RHEA-COMP:9657"/>
        <dbReference type="Rhea" id="RHEA-COMP:9923"/>
        <dbReference type="ChEBI" id="CHEBI:30616"/>
        <dbReference type="ChEBI" id="CHEBI:33019"/>
        <dbReference type="ChEBI" id="CHEBI:57972"/>
        <dbReference type="ChEBI" id="CHEBI:78442"/>
        <dbReference type="ChEBI" id="CHEBI:78497"/>
        <dbReference type="ChEBI" id="CHEBI:456215"/>
        <dbReference type="EC" id="6.1.1.7"/>
    </reaction>
</comment>
<comment type="cofactor">
    <cofactor evidence="1">
        <name>Zn(2+)</name>
        <dbReference type="ChEBI" id="CHEBI:29105"/>
    </cofactor>
    <text evidence="1">Binds 1 zinc ion per subunit.</text>
</comment>
<comment type="subcellular location">
    <subcellularLocation>
        <location evidence="1">Cytoplasm</location>
    </subcellularLocation>
</comment>
<comment type="domain">
    <text evidence="1">Consists of three domains; the N-terminal catalytic domain, the editing domain and the C-terminal C-Ala domain. The editing domain removes incorrectly charged amino acids, while the C-Ala domain, along with tRNA(Ala), serves as a bridge to cooperatively bring together the editing and aminoacylation centers thus stimulating deacylation of misacylated tRNAs.</text>
</comment>
<comment type="similarity">
    <text evidence="1">Belongs to the class-II aminoacyl-tRNA synthetase family.</text>
</comment>
<accession>Q8UE87</accession>
<reference key="1">
    <citation type="journal article" date="2001" name="Science">
        <title>The genome of the natural genetic engineer Agrobacterium tumefaciens C58.</title>
        <authorList>
            <person name="Wood D.W."/>
            <person name="Setubal J.C."/>
            <person name="Kaul R."/>
            <person name="Monks D.E."/>
            <person name="Kitajima J.P."/>
            <person name="Okura V.K."/>
            <person name="Zhou Y."/>
            <person name="Chen L."/>
            <person name="Wood G.E."/>
            <person name="Almeida N.F. Jr."/>
            <person name="Woo L."/>
            <person name="Chen Y."/>
            <person name="Paulsen I.T."/>
            <person name="Eisen J.A."/>
            <person name="Karp P.D."/>
            <person name="Bovee D. Sr."/>
            <person name="Chapman P."/>
            <person name="Clendenning J."/>
            <person name="Deatherage G."/>
            <person name="Gillet W."/>
            <person name="Grant C."/>
            <person name="Kutyavin T."/>
            <person name="Levy R."/>
            <person name="Li M.-J."/>
            <person name="McClelland E."/>
            <person name="Palmieri A."/>
            <person name="Raymond C."/>
            <person name="Rouse G."/>
            <person name="Saenphimmachak C."/>
            <person name="Wu Z."/>
            <person name="Romero P."/>
            <person name="Gordon D."/>
            <person name="Zhang S."/>
            <person name="Yoo H."/>
            <person name="Tao Y."/>
            <person name="Biddle P."/>
            <person name="Jung M."/>
            <person name="Krespan W."/>
            <person name="Perry M."/>
            <person name="Gordon-Kamm B."/>
            <person name="Liao L."/>
            <person name="Kim S."/>
            <person name="Hendrick C."/>
            <person name="Zhao Z.-Y."/>
            <person name="Dolan M."/>
            <person name="Chumley F."/>
            <person name="Tingey S.V."/>
            <person name="Tomb J.-F."/>
            <person name="Gordon M.P."/>
            <person name="Olson M.V."/>
            <person name="Nester E.W."/>
        </authorList>
    </citation>
    <scope>NUCLEOTIDE SEQUENCE [LARGE SCALE GENOMIC DNA]</scope>
    <source>
        <strain>C58 / ATCC 33970</strain>
    </source>
</reference>
<reference key="2">
    <citation type="journal article" date="2001" name="Science">
        <title>Genome sequence of the plant pathogen and biotechnology agent Agrobacterium tumefaciens C58.</title>
        <authorList>
            <person name="Goodner B."/>
            <person name="Hinkle G."/>
            <person name="Gattung S."/>
            <person name="Miller N."/>
            <person name="Blanchard M."/>
            <person name="Qurollo B."/>
            <person name="Goldman B.S."/>
            <person name="Cao Y."/>
            <person name="Askenazi M."/>
            <person name="Halling C."/>
            <person name="Mullin L."/>
            <person name="Houmiel K."/>
            <person name="Gordon J."/>
            <person name="Vaudin M."/>
            <person name="Iartchouk O."/>
            <person name="Epp A."/>
            <person name="Liu F."/>
            <person name="Wollam C."/>
            <person name="Allinger M."/>
            <person name="Doughty D."/>
            <person name="Scott C."/>
            <person name="Lappas C."/>
            <person name="Markelz B."/>
            <person name="Flanagan C."/>
            <person name="Crowell C."/>
            <person name="Gurson J."/>
            <person name="Lomo C."/>
            <person name="Sear C."/>
            <person name="Strub G."/>
            <person name="Cielo C."/>
            <person name="Slater S."/>
        </authorList>
    </citation>
    <scope>NUCLEOTIDE SEQUENCE [LARGE SCALE GENOMIC DNA]</scope>
    <source>
        <strain>C58 / ATCC 33970</strain>
    </source>
</reference>
<evidence type="ECO:0000255" key="1">
    <source>
        <dbReference type="HAMAP-Rule" id="MF_00036"/>
    </source>
</evidence>
<name>SYA_AGRFC</name>
<dbReference type="EC" id="6.1.1.7" evidence="1"/>
<dbReference type="EMBL" id="AE007869">
    <property type="protein sequence ID" value="AAK87639.2"/>
    <property type="molecule type" value="Genomic_DNA"/>
</dbReference>
<dbReference type="PIR" id="AG2806">
    <property type="entry name" value="AG2806"/>
</dbReference>
<dbReference type="PIR" id="F97585">
    <property type="entry name" value="F97585"/>
</dbReference>
<dbReference type="RefSeq" id="NP_354854.2">
    <property type="nucleotide sequence ID" value="NC_003062.2"/>
</dbReference>
<dbReference type="RefSeq" id="WP_010971929.1">
    <property type="nucleotide sequence ID" value="NC_003062.2"/>
</dbReference>
<dbReference type="SMR" id="Q8UE87"/>
<dbReference type="STRING" id="176299.Atu1873"/>
<dbReference type="EnsemblBacteria" id="AAK87639">
    <property type="protein sequence ID" value="AAK87639"/>
    <property type="gene ID" value="Atu1873"/>
</dbReference>
<dbReference type="GeneID" id="1133911"/>
<dbReference type="KEGG" id="atu:Atu1873"/>
<dbReference type="PATRIC" id="fig|176299.10.peg.1887"/>
<dbReference type="eggNOG" id="COG0013">
    <property type="taxonomic scope" value="Bacteria"/>
</dbReference>
<dbReference type="HOGENOM" id="CLU_004485_1_1_5"/>
<dbReference type="OrthoDB" id="9803884at2"/>
<dbReference type="PhylomeDB" id="Q8UE87"/>
<dbReference type="BioCyc" id="AGRO:ATU1873-MONOMER"/>
<dbReference type="Proteomes" id="UP000000813">
    <property type="component" value="Chromosome circular"/>
</dbReference>
<dbReference type="GO" id="GO:0005829">
    <property type="term" value="C:cytosol"/>
    <property type="evidence" value="ECO:0007669"/>
    <property type="project" value="TreeGrafter"/>
</dbReference>
<dbReference type="GO" id="GO:0004813">
    <property type="term" value="F:alanine-tRNA ligase activity"/>
    <property type="evidence" value="ECO:0007669"/>
    <property type="project" value="UniProtKB-UniRule"/>
</dbReference>
<dbReference type="GO" id="GO:0002161">
    <property type="term" value="F:aminoacyl-tRNA deacylase activity"/>
    <property type="evidence" value="ECO:0007669"/>
    <property type="project" value="TreeGrafter"/>
</dbReference>
<dbReference type="GO" id="GO:0005524">
    <property type="term" value="F:ATP binding"/>
    <property type="evidence" value="ECO:0007669"/>
    <property type="project" value="UniProtKB-UniRule"/>
</dbReference>
<dbReference type="GO" id="GO:0000049">
    <property type="term" value="F:tRNA binding"/>
    <property type="evidence" value="ECO:0007669"/>
    <property type="project" value="UniProtKB-KW"/>
</dbReference>
<dbReference type="GO" id="GO:0008270">
    <property type="term" value="F:zinc ion binding"/>
    <property type="evidence" value="ECO:0007669"/>
    <property type="project" value="UniProtKB-UniRule"/>
</dbReference>
<dbReference type="GO" id="GO:0006419">
    <property type="term" value="P:alanyl-tRNA aminoacylation"/>
    <property type="evidence" value="ECO:0007669"/>
    <property type="project" value="UniProtKB-UniRule"/>
</dbReference>
<dbReference type="GO" id="GO:0045892">
    <property type="term" value="P:negative regulation of DNA-templated transcription"/>
    <property type="evidence" value="ECO:0007669"/>
    <property type="project" value="TreeGrafter"/>
</dbReference>
<dbReference type="CDD" id="cd00673">
    <property type="entry name" value="AlaRS_core"/>
    <property type="match status" value="1"/>
</dbReference>
<dbReference type="FunFam" id="2.40.30.130:FF:000001">
    <property type="entry name" value="Alanine--tRNA ligase"/>
    <property type="match status" value="1"/>
</dbReference>
<dbReference type="FunFam" id="3.10.310.40:FF:000001">
    <property type="entry name" value="Alanine--tRNA ligase"/>
    <property type="match status" value="1"/>
</dbReference>
<dbReference type="FunFam" id="3.30.54.20:FF:000001">
    <property type="entry name" value="Alanine--tRNA ligase"/>
    <property type="match status" value="1"/>
</dbReference>
<dbReference type="FunFam" id="3.30.930.10:FF:000004">
    <property type="entry name" value="Alanine--tRNA ligase"/>
    <property type="match status" value="1"/>
</dbReference>
<dbReference type="FunFam" id="3.30.980.10:FF:000004">
    <property type="entry name" value="Alanine--tRNA ligase, cytoplasmic"/>
    <property type="match status" value="1"/>
</dbReference>
<dbReference type="Gene3D" id="2.40.30.130">
    <property type="match status" value="1"/>
</dbReference>
<dbReference type="Gene3D" id="3.10.310.40">
    <property type="match status" value="1"/>
</dbReference>
<dbReference type="Gene3D" id="3.30.54.20">
    <property type="match status" value="1"/>
</dbReference>
<dbReference type="Gene3D" id="6.10.250.550">
    <property type="match status" value="1"/>
</dbReference>
<dbReference type="Gene3D" id="3.30.930.10">
    <property type="entry name" value="Bira Bifunctional Protein, Domain 2"/>
    <property type="match status" value="1"/>
</dbReference>
<dbReference type="Gene3D" id="3.30.980.10">
    <property type="entry name" value="Threonyl-trna Synthetase, Chain A, domain 2"/>
    <property type="match status" value="1"/>
</dbReference>
<dbReference type="HAMAP" id="MF_00036_B">
    <property type="entry name" value="Ala_tRNA_synth_B"/>
    <property type="match status" value="1"/>
</dbReference>
<dbReference type="InterPro" id="IPR045864">
    <property type="entry name" value="aa-tRNA-synth_II/BPL/LPL"/>
</dbReference>
<dbReference type="InterPro" id="IPR002318">
    <property type="entry name" value="Ala-tRNA-lgiase_IIc"/>
</dbReference>
<dbReference type="InterPro" id="IPR018162">
    <property type="entry name" value="Ala-tRNA-ligase_IIc_anticod-bd"/>
</dbReference>
<dbReference type="InterPro" id="IPR018165">
    <property type="entry name" value="Ala-tRNA-synth_IIc_core"/>
</dbReference>
<dbReference type="InterPro" id="IPR018164">
    <property type="entry name" value="Ala-tRNA-synth_IIc_N"/>
</dbReference>
<dbReference type="InterPro" id="IPR050058">
    <property type="entry name" value="Ala-tRNA_ligase"/>
</dbReference>
<dbReference type="InterPro" id="IPR023033">
    <property type="entry name" value="Ala_tRNA_ligase_euk/bac"/>
</dbReference>
<dbReference type="InterPro" id="IPR003156">
    <property type="entry name" value="DHHA1_dom"/>
</dbReference>
<dbReference type="InterPro" id="IPR018163">
    <property type="entry name" value="Thr/Ala-tRNA-synth_IIc_edit"/>
</dbReference>
<dbReference type="InterPro" id="IPR009000">
    <property type="entry name" value="Transl_B-barrel_sf"/>
</dbReference>
<dbReference type="InterPro" id="IPR012947">
    <property type="entry name" value="tRNA_SAD"/>
</dbReference>
<dbReference type="NCBIfam" id="TIGR00344">
    <property type="entry name" value="alaS"/>
    <property type="match status" value="1"/>
</dbReference>
<dbReference type="PANTHER" id="PTHR11777:SF9">
    <property type="entry name" value="ALANINE--TRNA LIGASE, CYTOPLASMIC"/>
    <property type="match status" value="1"/>
</dbReference>
<dbReference type="PANTHER" id="PTHR11777">
    <property type="entry name" value="ALANYL-TRNA SYNTHETASE"/>
    <property type="match status" value="1"/>
</dbReference>
<dbReference type="Pfam" id="PF02272">
    <property type="entry name" value="DHHA1"/>
    <property type="match status" value="1"/>
</dbReference>
<dbReference type="Pfam" id="PF01411">
    <property type="entry name" value="tRNA-synt_2c"/>
    <property type="match status" value="1"/>
</dbReference>
<dbReference type="Pfam" id="PF07973">
    <property type="entry name" value="tRNA_SAD"/>
    <property type="match status" value="1"/>
</dbReference>
<dbReference type="PRINTS" id="PR00980">
    <property type="entry name" value="TRNASYNTHALA"/>
</dbReference>
<dbReference type="SMART" id="SM00863">
    <property type="entry name" value="tRNA_SAD"/>
    <property type="match status" value="1"/>
</dbReference>
<dbReference type="SUPFAM" id="SSF55681">
    <property type="entry name" value="Class II aaRS and biotin synthetases"/>
    <property type="match status" value="1"/>
</dbReference>
<dbReference type="SUPFAM" id="SSF101353">
    <property type="entry name" value="Putative anticodon-binding domain of alanyl-tRNA synthetase (AlaRS)"/>
    <property type="match status" value="1"/>
</dbReference>
<dbReference type="SUPFAM" id="SSF55186">
    <property type="entry name" value="ThrRS/AlaRS common domain"/>
    <property type="match status" value="1"/>
</dbReference>
<dbReference type="SUPFAM" id="SSF50447">
    <property type="entry name" value="Translation proteins"/>
    <property type="match status" value="1"/>
</dbReference>
<dbReference type="PROSITE" id="PS50860">
    <property type="entry name" value="AA_TRNA_LIGASE_II_ALA"/>
    <property type="match status" value="1"/>
</dbReference>
<protein>
    <recommendedName>
        <fullName evidence="1">Alanine--tRNA ligase</fullName>
        <ecNumber evidence="1">6.1.1.7</ecNumber>
    </recommendedName>
    <alternativeName>
        <fullName evidence="1">Alanyl-tRNA synthetase</fullName>
        <shortName evidence="1">AlaRS</shortName>
    </alternativeName>
</protein>